<feature type="chain" id="PRO_0000427745" description="Uncharacterized S-adenosylmethionine-dependent methyltransferase MT3122">
    <location>
        <begin position="1"/>
        <end position="358"/>
    </location>
</feature>
<name>Y3037_MYCTO</name>
<accession>P9WJZ2</accession>
<accession>L0TBD0</accession>
<accession>O53284</accession>
<accession>Q7D688</accession>
<dbReference type="EC" id="2.1.1.-"/>
<dbReference type="EMBL" id="AE000516">
    <property type="protein sequence ID" value="AAK47452.1"/>
    <property type="molecule type" value="Genomic_DNA"/>
</dbReference>
<dbReference type="PIR" id="H70859">
    <property type="entry name" value="H70859"/>
</dbReference>
<dbReference type="SMR" id="P9WJZ2"/>
<dbReference type="KEGG" id="mtc:MT3122"/>
<dbReference type="PATRIC" id="fig|83331.31.peg.3364"/>
<dbReference type="HOGENOM" id="CLU_038123_1_0_11"/>
<dbReference type="Proteomes" id="UP000001020">
    <property type="component" value="Chromosome"/>
</dbReference>
<dbReference type="GO" id="GO:0008168">
    <property type="term" value="F:methyltransferase activity"/>
    <property type="evidence" value="ECO:0007669"/>
    <property type="project" value="UniProtKB-KW"/>
</dbReference>
<dbReference type="GO" id="GO:0032259">
    <property type="term" value="P:methylation"/>
    <property type="evidence" value="ECO:0007669"/>
    <property type="project" value="UniProtKB-KW"/>
</dbReference>
<dbReference type="Gene3D" id="3.40.50.150">
    <property type="entry name" value="Vaccinia Virus protein VP39"/>
    <property type="match status" value="1"/>
</dbReference>
<dbReference type="InterPro" id="IPR029063">
    <property type="entry name" value="SAM-dependent_MTases_sf"/>
</dbReference>
<dbReference type="InterPro" id="IPR041497">
    <property type="entry name" value="Thump-like"/>
</dbReference>
<dbReference type="PANTHER" id="PTHR14741">
    <property type="entry name" value="S-ADENOSYLMETHIONINE-DEPENDENT METHYLTRANSFERASE RELATED"/>
    <property type="match status" value="1"/>
</dbReference>
<dbReference type="PANTHER" id="PTHR14741:SF32">
    <property type="entry name" value="TRIMETHYLGUANOSINE SYNTHASE"/>
    <property type="match status" value="1"/>
</dbReference>
<dbReference type="Pfam" id="PF18096">
    <property type="entry name" value="Thump_like"/>
    <property type="match status" value="1"/>
</dbReference>
<dbReference type="SUPFAM" id="SSF53335">
    <property type="entry name" value="S-adenosyl-L-methionine-dependent methyltransferases"/>
    <property type="match status" value="1"/>
</dbReference>
<gene>
    <name type="ordered locus">MT3122</name>
</gene>
<protein>
    <recommendedName>
        <fullName>Uncharacterized S-adenosylmethionine-dependent methyltransferase MT3122</fullName>
        <ecNumber>2.1.1.-</ecNumber>
    </recommendedName>
</protein>
<reference key="1">
    <citation type="journal article" date="2002" name="J. Bacteriol.">
        <title>Whole-genome comparison of Mycobacterium tuberculosis clinical and laboratory strains.</title>
        <authorList>
            <person name="Fleischmann R.D."/>
            <person name="Alland D."/>
            <person name="Eisen J.A."/>
            <person name="Carpenter L."/>
            <person name="White O."/>
            <person name="Peterson J.D."/>
            <person name="DeBoy R.T."/>
            <person name="Dodson R.J."/>
            <person name="Gwinn M.L."/>
            <person name="Haft D.H."/>
            <person name="Hickey E.K."/>
            <person name="Kolonay J.F."/>
            <person name="Nelson W.C."/>
            <person name="Umayam L.A."/>
            <person name="Ermolaeva M.D."/>
            <person name="Salzberg S.L."/>
            <person name="Delcher A."/>
            <person name="Utterback T.R."/>
            <person name="Weidman J.F."/>
            <person name="Khouri H.M."/>
            <person name="Gill J."/>
            <person name="Mikula A."/>
            <person name="Bishai W."/>
            <person name="Jacobs W.R. Jr."/>
            <person name="Venter J.C."/>
            <person name="Fraser C.M."/>
        </authorList>
    </citation>
    <scope>NUCLEOTIDE SEQUENCE [LARGE SCALE GENOMIC DNA]</scope>
    <source>
        <strain>CDC 1551 / Oshkosh</strain>
    </source>
</reference>
<organism>
    <name type="scientific">Mycobacterium tuberculosis (strain CDC 1551 / Oshkosh)</name>
    <dbReference type="NCBI Taxonomy" id="83331"/>
    <lineage>
        <taxon>Bacteria</taxon>
        <taxon>Bacillati</taxon>
        <taxon>Actinomycetota</taxon>
        <taxon>Actinomycetes</taxon>
        <taxon>Mycobacteriales</taxon>
        <taxon>Mycobacteriaceae</taxon>
        <taxon>Mycobacterium</taxon>
        <taxon>Mycobacterium tuberculosis complex</taxon>
    </lineage>
</organism>
<comment type="similarity">
    <text evidence="1">Belongs to the methyltransferase superfamily.</text>
</comment>
<proteinExistence type="inferred from homology"/>
<sequence length="358" mass="39082">MRARFGDRAPWLVETTLLRRRAAGKLGELCPNVGVSQWLFTDEALQQATAAPVARHRARRLAGRVVHDATCSIGTELAALRELAVRAVGSDIDPVRLAMARHNLAALGMEADLCRADVLHPVTRDAVVVIDPARRSNGRRRFHLADYQPGLGPLLDRYRGRDVVVKCAPGIDFEEVGRLGFEGEIEVISYRGGVREACLWSAGLAGSGIRRRASILDSGEQIGDDEPDDCGVRPAGKWIVDPDGAVVRAGLVRNYGARHGLWQLDPQIAYLSGDRLPPALRGFEVLEQLAFDERRLRQVLSALDCGAAEILVRGVAIDPDALRRRLRLRGSRPLAVVITRIGAGSLSHVTAYVCRPSR</sequence>
<evidence type="ECO:0000305" key="1"/>
<keyword id="KW-0489">Methyltransferase</keyword>
<keyword id="KW-1185">Reference proteome</keyword>
<keyword id="KW-0949">S-adenosyl-L-methionine</keyword>
<keyword id="KW-0808">Transferase</keyword>